<protein>
    <recommendedName>
        <fullName evidence="1">Small ribosomal subunit protein uS7</fullName>
    </recommendedName>
    <alternativeName>
        <fullName evidence="2">30S ribosomal protein S7</fullName>
    </alternativeName>
</protein>
<name>RS7_BART1</name>
<reference key="1">
    <citation type="journal article" date="2007" name="Nat. Genet.">
        <title>Genomic analysis of Bartonella identifies type IV secretion systems as host adaptability factors.</title>
        <authorList>
            <person name="Saenz H.L."/>
            <person name="Engel P."/>
            <person name="Stoeckli M.C."/>
            <person name="Lanz C."/>
            <person name="Raddatz G."/>
            <person name="Vayssier-Taussat M."/>
            <person name="Birtles R."/>
            <person name="Schuster S.C."/>
            <person name="Dehio C."/>
        </authorList>
    </citation>
    <scope>NUCLEOTIDE SEQUENCE [LARGE SCALE GENOMIC DNA]</scope>
    <source>
        <strain>CIP 105476 / IBS 506</strain>
    </source>
</reference>
<comment type="function">
    <text evidence="1">One of the primary rRNA binding proteins, it binds directly to 16S rRNA where it nucleates assembly of the head domain of the 30S subunit. Is located at the subunit interface close to the decoding center, probably blocks exit of the E-site tRNA.</text>
</comment>
<comment type="subunit">
    <text evidence="1">Part of the 30S ribosomal subunit. Contacts proteins S9 and S11.</text>
</comment>
<comment type="similarity">
    <text evidence="1">Belongs to the universal ribosomal protein uS7 family.</text>
</comment>
<sequence>MSRRHRAEKREINPDPKFGDLVITKFMNAIMFDGKKSVAERIVYGALDSVEKKVKADPVDLFHRALENVAPHIEVRSRRVGGATYQVPIDVRPDRRQALAIRWLISAACGRNETTMIERLSGELMDAANNRGSAVKKREDVHRMAEANRAFSHYRW</sequence>
<accession>A9IW33</accession>
<proteinExistence type="inferred from homology"/>
<keyword id="KW-0687">Ribonucleoprotein</keyword>
<keyword id="KW-0689">Ribosomal protein</keyword>
<keyword id="KW-0694">RNA-binding</keyword>
<keyword id="KW-0699">rRNA-binding</keyword>
<keyword id="KW-0820">tRNA-binding</keyword>
<feature type="chain" id="PRO_1000081270" description="Small ribosomal subunit protein uS7">
    <location>
        <begin position="1"/>
        <end position="156"/>
    </location>
</feature>
<evidence type="ECO:0000255" key="1">
    <source>
        <dbReference type="HAMAP-Rule" id="MF_00480"/>
    </source>
</evidence>
<evidence type="ECO:0000305" key="2"/>
<organism>
    <name type="scientific">Bartonella tribocorum (strain CIP 105476 / IBS 506)</name>
    <dbReference type="NCBI Taxonomy" id="382640"/>
    <lineage>
        <taxon>Bacteria</taxon>
        <taxon>Pseudomonadati</taxon>
        <taxon>Pseudomonadota</taxon>
        <taxon>Alphaproteobacteria</taxon>
        <taxon>Hyphomicrobiales</taxon>
        <taxon>Bartonellaceae</taxon>
        <taxon>Bartonella</taxon>
    </lineage>
</organism>
<gene>
    <name evidence="1" type="primary">rpsG</name>
    <name type="ordered locus">BT_1522</name>
</gene>
<dbReference type="EMBL" id="AM260525">
    <property type="protein sequence ID" value="CAK01868.1"/>
    <property type="molecule type" value="Genomic_DNA"/>
</dbReference>
<dbReference type="RefSeq" id="WP_012231999.1">
    <property type="nucleotide sequence ID" value="NC_010161.1"/>
</dbReference>
<dbReference type="SMR" id="A9IW33"/>
<dbReference type="KEGG" id="btr:BT_1522"/>
<dbReference type="eggNOG" id="COG0049">
    <property type="taxonomic scope" value="Bacteria"/>
</dbReference>
<dbReference type="HOGENOM" id="CLU_072226_1_1_5"/>
<dbReference type="Proteomes" id="UP000001592">
    <property type="component" value="Chromosome"/>
</dbReference>
<dbReference type="GO" id="GO:0015935">
    <property type="term" value="C:small ribosomal subunit"/>
    <property type="evidence" value="ECO:0007669"/>
    <property type="project" value="InterPro"/>
</dbReference>
<dbReference type="GO" id="GO:0019843">
    <property type="term" value="F:rRNA binding"/>
    <property type="evidence" value="ECO:0007669"/>
    <property type="project" value="UniProtKB-UniRule"/>
</dbReference>
<dbReference type="GO" id="GO:0003735">
    <property type="term" value="F:structural constituent of ribosome"/>
    <property type="evidence" value="ECO:0007669"/>
    <property type="project" value="InterPro"/>
</dbReference>
<dbReference type="GO" id="GO:0000049">
    <property type="term" value="F:tRNA binding"/>
    <property type="evidence" value="ECO:0007669"/>
    <property type="project" value="UniProtKB-UniRule"/>
</dbReference>
<dbReference type="GO" id="GO:0006412">
    <property type="term" value="P:translation"/>
    <property type="evidence" value="ECO:0007669"/>
    <property type="project" value="UniProtKB-UniRule"/>
</dbReference>
<dbReference type="CDD" id="cd14869">
    <property type="entry name" value="uS7_Bacteria"/>
    <property type="match status" value="1"/>
</dbReference>
<dbReference type="FunFam" id="1.10.455.10:FF:000001">
    <property type="entry name" value="30S ribosomal protein S7"/>
    <property type="match status" value="1"/>
</dbReference>
<dbReference type="Gene3D" id="1.10.455.10">
    <property type="entry name" value="Ribosomal protein S7 domain"/>
    <property type="match status" value="1"/>
</dbReference>
<dbReference type="HAMAP" id="MF_00480_B">
    <property type="entry name" value="Ribosomal_uS7_B"/>
    <property type="match status" value="1"/>
</dbReference>
<dbReference type="InterPro" id="IPR000235">
    <property type="entry name" value="Ribosomal_uS7"/>
</dbReference>
<dbReference type="InterPro" id="IPR005717">
    <property type="entry name" value="Ribosomal_uS7_bac/org-type"/>
</dbReference>
<dbReference type="InterPro" id="IPR020606">
    <property type="entry name" value="Ribosomal_uS7_CS"/>
</dbReference>
<dbReference type="InterPro" id="IPR023798">
    <property type="entry name" value="Ribosomal_uS7_dom"/>
</dbReference>
<dbReference type="InterPro" id="IPR036823">
    <property type="entry name" value="Ribosomal_uS7_dom_sf"/>
</dbReference>
<dbReference type="NCBIfam" id="TIGR01029">
    <property type="entry name" value="rpsG_bact"/>
    <property type="match status" value="1"/>
</dbReference>
<dbReference type="PANTHER" id="PTHR11205">
    <property type="entry name" value="RIBOSOMAL PROTEIN S7"/>
    <property type="match status" value="1"/>
</dbReference>
<dbReference type="Pfam" id="PF00177">
    <property type="entry name" value="Ribosomal_S7"/>
    <property type="match status" value="1"/>
</dbReference>
<dbReference type="PIRSF" id="PIRSF002122">
    <property type="entry name" value="RPS7p_RPS7a_RPS5e_RPS7o"/>
    <property type="match status" value="1"/>
</dbReference>
<dbReference type="SUPFAM" id="SSF47973">
    <property type="entry name" value="Ribosomal protein S7"/>
    <property type="match status" value="1"/>
</dbReference>
<dbReference type="PROSITE" id="PS00052">
    <property type="entry name" value="RIBOSOMAL_S7"/>
    <property type="match status" value="1"/>
</dbReference>